<feature type="chain" id="PRO_0000209018" description="Probable potassium transport system protein Kup 3">
    <location>
        <begin position="1"/>
        <end position="605"/>
    </location>
</feature>
<feature type="transmembrane region" description="Helical" evidence="1">
    <location>
        <begin position="16"/>
        <end position="36"/>
    </location>
</feature>
<feature type="transmembrane region" description="Helical" evidence="1">
    <location>
        <begin position="49"/>
        <end position="69"/>
    </location>
</feature>
<feature type="transmembrane region" description="Helical" evidence="1">
    <location>
        <begin position="97"/>
        <end position="117"/>
    </location>
</feature>
<feature type="transmembrane region" description="Helical" evidence="1">
    <location>
        <begin position="138"/>
        <end position="158"/>
    </location>
</feature>
<feature type="transmembrane region" description="Helical" evidence="1">
    <location>
        <begin position="170"/>
        <end position="190"/>
    </location>
</feature>
<feature type="transmembrane region" description="Helical" evidence="1">
    <location>
        <begin position="212"/>
        <end position="232"/>
    </location>
</feature>
<feature type="transmembrane region" description="Helical" evidence="1">
    <location>
        <begin position="247"/>
        <end position="267"/>
    </location>
</feature>
<feature type="transmembrane region" description="Helical" evidence="1">
    <location>
        <begin position="287"/>
        <end position="307"/>
    </location>
</feature>
<feature type="transmembrane region" description="Helical" evidence="1">
    <location>
        <begin position="339"/>
        <end position="359"/>
    </location>
</feature>
<feature type="transmembrane region" description="Helical" evidence="1">
    <location>
        <begin position="368"/>
        <end position="388"/>
    </location>
</feature>
<feature type="transmembrane region" description="Helical" evidence="1">
    <location>
        <begin position="397"/>
        <end position="417"/>
    </location>
</feature>
<feature type="transmembrane region" description="Helical" evidence="1">
    <location>
        <begin position="418"/>
        <end position="438"/>
    </location>
</feature>
<proteinExistence type="inferred from homology"/>
<comment type="function">
    <text evidence="1">Transport of potassium into the cell. Likely operates as a K(+):H(+) symporter.</text>
</comment>
<comment type="catalytic activity">
    <reaction evidence="1">
        <text>K(+)(in) + H(+)(in) = K(+)(out) + H(+)(out)</text>
        <dbReference type="Rhea" id="RHEA:28490"/>
        <dbReference type="ChEBI" id="CHEBI:15378"/>
        <dbReference type="ChEBI" id="CHEBI:29103"/>
    </reaction>
    <physiologicalReaction direction="right-to-left" evidence="1">
        <dbReference type="Rhea" id="RHEA:28492"/>
    </physiologicalReaction>
</comment>
<comment type="subcellular location">
    <subcellularLocation>
        <location evidence="1">Cell inner membrane</location>
        <topology evidence="1">Multi-pass membrane protein</topology>
    </subcellularLocation>
</comment>
<comment type="similarity">
    <text evidence="1">Belongs to the HAK/KUP transporter (TC 2.A.72) family.</text>
</comment>
<protein>
    <recommendedName>
        <fullName evidence="1">Probable potassium transport system protein Kup 3</fullName>
    </recommendedName>
</protein>
<organism>
    <name type="scientific">Geobacter sulfurreducens (strain ATCC 51573 / DSM 12127 / PCA)</name>
    <dbReference type="NCBI Taxonomy" id="243231"/>
    <lineage>
        <taxon>Bacteria</taxon>
        <taxon>Pseudomonadati</taxon>
        <taxon>Thermodesulfobacteriota</taxon>
        <taxon>Desulfuromonadia</taxon>
        <taxon>Geobacterales</taxon>
        <taxon>Geobacteraceae</taxon>
        <taxon>Geobacter</taxon>
    </lineage>
</organism>
<reference key="1">
    <citation type="journal article" date="2003" name="Science">
        <title>Genome of Geobacter sulfurreducens: metal reduction in subsurface environments.</title>
        <authorList>
            <person name="Methe B.A."/>
            <person name="Nelson K.E."/>
            <person name="Eisen J.A."/>
            <person name="Paulsen I.T."/>
            <person name="Nelson W.C."/>
            <person name="Heidelberg J.F."/>
            <person name="Wu D."/>
            <person name="Wu M."/>
            <person name="Ward N.L."/>
            <person name="Beanan M.J."/>
            <person name="Dodson R.J."/>
            <person name="Madupu R."/>
            <person name="Brinkac L.M."/>
            <person name="Daugherty S.C."/>
            <person name="DeBoy R.T."/>
            <person name="Durkin A.S."/>
            <person name="Gwinn M.L."/>
            <person name="Kolonay J.F."/>
            <person name="Sullivan S.A."/>
            <person name="Haft D.H."/>
            <person name="Selengut J."/>
            <person name="Davidsen T.M."/>
            <person name="Zafar N."/>
            <person name="White O."/>
            <person name="Tran B."/>
            <person name="Romero C."/>
            <person name="Forberger H.A."/>
            <person name="Weidman J.F."/>
            <person name="Khouri H.M."/>
            <person name="Feldblyum T.V."/>
            <person name="Utterback T.R."/>
            <person name="Van Aken S.E."/>
            <person name="Lovley D.R."/>
            <person name="Fraser C.M."/>
        </authorList>
    </citation>
    <scope>NUCLEOTIDE SEQUENCE [LARGE SCALE GENOMIC DNA]</scope>
    <source>
        <strain>ATCC 51573 / DSM 12127 / PCA</strain>
    </source>
</reference>
<name>KUP3_GEOSL</name>
<accession>Q747C1</accession>
<gene>
    <name evidence="1" type="primary">kup3</name>
    <name type="ordered locus">GSU3346</name>
</gene>
<keyword id="KW-0997">Cell inner membrane</keyword>
<keyword id="KW-1003">Cell membrane</keyword>
<keyword id="KW-0406">Ion transport</keyword>
<keyword id="KW-0472">Membrane</keyword>
<keyword id="KW-0630">Potassium</keyword>
<keyword id="KW-0633">Potassium transport</keyword>
<keyword id="KW-1185">Reference proteome</keyword>
<keyword id="KW-0769">Symport</keyword>
<keyword id="KW-0812">Transmembrane</keyword>
<keyword id="KW-1133">Transmembrane helix</keyword>
<keyword id="KW-0813">Transport</keyword>
<evidence type="ECO:0000255" key="1">
    <source>
        <dbReference type="HAMAP-Rule" id="MF_01522"/>
    </source>
</evidence>
<dbReference type="EMBL" id="AE017180">
    <property type="protein sequence ID" value="AAR36736.2"/>
    <property type="molecule type" value="Genomic_DNA"/>
</dbReference>
<dbReference type="RefSeq" id="NP_954386.2">
    <property type="nucleotide sequence ID" value="NC_002939.5"/>
</dbReference>
<dbReference type="RefSeq" id="WP_010943958.1">
    <property type="nucleotide sequence ID" value="NC_002939.5"/>
</dbReference>
<dbReference type="STRING" id="243231.GSU3346"/>
<dbReference type="EnsemblBacteria" id="AAR36736">
    <property type="protein sequence ID" value="AAR36736"/>
    <property type="gene ID" value="GSU3346"/>
</dbReference>
<dbReference type="KEGG" id="gsu:GSU3346"/>
<dbReference type="PATRIC" id="fig|243231.5.peg.3367"/>
<dbReference type="eggNOG" id="COG3158">
    <property type="taxonomic scope" value="Bacteria"/>
</dbReference>
<dbReference type="HOGENOM" id="CLU_008142_4_2_7"/>
<dbReference type="InParanoid" id="Q747C1"/>
<dbReference type="OrthoDB" id="9805577at2"/>
<dbReference type="Proteomes" id="UP000000577">
    <property type="component" value="Chromosome"/>
</dbReference>
<dbReference type="GO" id="GO:0016020">
    <property type="term" value="C:membrane"/>
    <property type="evidence" value="ECO:0000318"/>
    <property type="project" value="GO_Central"/>
</dbReference>
<dbReference type="GO" id="GO:0005886">
    <property type="term" value="C:plasma membrane"/>
    <property type="evidence" value="ECO:0007669"/>
    <property type="project" value="UniProtKB-SubCell"/>
</dbReference>
<dbReference type="GO" id="GO:0015079">
    <property type="term" value="F:potassium ion transmembrane transporter activity"/>
    <property type="evidence" value="ECO:0000318"/>
    <property type="project" value="GO_Central"/>
</dbReference>
<dbReference type="GO" id="GO:0015293">
    <property type="term" value="F:symporter activity"/>
    <property type="evidence" value="ECO:0007669"/>
    <property type="project" value="UniProtKB-UniRule"/>
</dbReference>
<dbReference type="GO" id="GO:0006813">
    <property type="term" value="P:potassium ion transport"/>
    <property type="evidence" value="ECO:0000318"/>
    <property type="project" value="GO_Central"/>
</dbReference>
<dbReference type="HAMAP" id="MF_01522">
    <property type="entry name" value="Kup"/>
    <property type="match status" value="1"/>
</dbReference>
<dbReference type="InterPro" id="IPR003855">
    <property type="entry name" value="K+_transporter"/>
</dbReference>
<dbReference type="InterPro" id="IPR053952">
    <property type="entry name" value="K_trans_C"/>
</dbReference>
<dbReference type="InterPro" id="IPR053951">
    <property type="entry name" value="K_trans_N"/>
</dbReference>
<dbReference type="InterPro" id="IPR023051">
    <property type="entry name" value="Kup"/>
</dbReference>
<dbReference type="PANTHER" id="PTHR30540:SF83">
    <property type="entry name" value="K+ POTASSIUM TRANSPORTER"/>
    <property type="match status" value="1"/>
</dbReference>
<dbReference type="PANTHER" id="PTHR30540">
    <property type="entry name" value="OSMOTIC STRESS POTASSIUM TRANSPORTER"/>
    <property type="match status" value="1"/>
</dbReference>
<dbReference type="Pfam" id="PF02705">
    <property type="entry name" value="K_trans"/>
    <property type="match status" value="1"/>
</dbReference>
<dbReference type="Pfam" id="PF22776">
    <property type="entry name" value="K_trans_C"/>
    <property type="match status" value="1"/>
</dbReference>
<sequence>MEHHKHDTFLGGIVKALGLVFGDIGTSPIYTLTVIFTLTQPTIDNVYGILSLIFWTMTILVSAEYAWLAMSLGRKGQGGEIVLREIIMKLVKAGRLVAFAGFLSFVGVSLLLGDAVITPAISILSAVEGLLLIPGLEGLSTGALVAIAAAIAIGLFSVQHKGTDRVASAFGPIMALWFGTLAVTGAVSAFSMPQIVEAINPLHGIAFFRDNGLAGYFVLSEVILCATGGEALYADMGHLGKRPIVRAWHFVFVALYLNYLGQGVFAIAHPDAKNLLFGMVRSQAPALYIPFLILTIMATIIASQAIISGVFSIVYQGITTRLLPLMRVDYTSRQIKSQIYLGAVNWSLMVAVIFIMLVFRKSENLAAAYGMAVTGSMTITGIMMIIVFSHTTKKWRALVALVVTLIAAAYHVSTFSKLPHGAYWSIILASIPFVTIIIWTRGQRTLYRALKPLDLETFLISYEQIYAKGPIRGTGLFFTRETDVVPPYVVHCIIRSNIIYERNVFISLMISDEPLGVETELIRGIGPGLDAFRIEAGYMEMVDIERLLKENGIQEKVIFYGVEDISTRNPFWRFFSVLKKLTPNFVQFHKLPASRLQGVVTRVEM</sequence>